<evidence type="ECO:0000255" key="1">
    <source>
        <dbReference type="HAMAP-Rule" id="MF_01849"/>
    </source>
</evidence>
<evidence type="ECO:0000255" key="2">
    <source>
        <dbReference type="PROSITE-ProRule" id="PRU01266"/>
    </source>
</evidence>
<sequence length="408" mass="45608">MAVSYDLRPIGTCPVRESDNIIVKERSKLSLIGLSQDEMAEALKAIGIPERQTRMRVRQLWHWLYVRGVSNFDEMLNISKPMQEIFKKHFSIARPEIAGEQISKDGTRKWLLRFPPRGAGRPVEIETVYIPEEGRGTLCLSSQVGCTLTCSFCYTGTQVLVRNLTAEEILAQLLVARDCLGDFPDRNTPDGAIVPVEGRKITNIVMMGMGEPLYNFEAVKKALLIASDGNGLSLSKRRITLSTSGVVPGMIRTGEEIGVMLAISLHAVNDTLRDMLVPINKKYPLALLMDACRQYPGLSNAKRITFEYVMLKDVNDSLDDAKRLVQLLKGIPAKINLIPFNPWPGSNYQCSDWEQIERFADVVNQAGYASPIRIPRGRDILAACGQLKSASERLRKSERLHLEHIVNS</sequence>
<protein>
    <recommendedName>
        <fullName evidence="1">Dual-specificity RNA methyltransferase RlmN</fullName>
        <ecNumber evidence="1">2.1.1.192</ecNumber>
    </recommendedName>
    <alternativeName>
        <fullName evidence="1">23S rRNA (adenine(2503)-C(2))-methyltransferase</fullName>
    </alternativeName>
    <alternativeName>
        <fullName evidence="1">23S rRNA m2A2503 methyltransferase</fullName>
    </alternativeName>
    <alternativeName>
        <fullName evidence="1">Ribosomal RNA large subunit methyltransferase N</fullName>
    </alternativeName>
    <alternativeName>
        <fullName evidence="1">tRNA (adenine(37)-C(2))-methyltransferase</fullName>
    </alternativeName>
    <alternativeName>
        <fullName evidence="1">tRNA m2A37 methyltransferase</fullName>
    </alternativeName>
</protein>
<dbReference type="EC" id="2.1.1.192" evidence="1"/>
<dbReference type="EMBL" id="BX897699">
    <property type="protein sequence ID" value="CAF26836.1"/>
    <property type="molecule type" value="Genomic_DNA"/>
</dbReference>
<dbReference type="RefSeq" id="WP_011179990.1">
    <property type="nucleotide sequence ID" value="NZ_LRIJ02000001.1"/>
</dbReference>
<dbReference type="SMR" id="Q6G592"/>
<dbReference type="PaxDb" id="283166-BH00200"/>
<dbReference type="EnsemblBacteria" id="CAF26836">
    <property type="protein sequence ID" value="CAF26836"/>
    <property type="gene ID" value="BH00200"/>
</dbReference>
<dbReference type="GeneID" id="92986310"/>
<dbReference type="KEGG" id="bhe:BH00200"/>
<dbReference type="eggNOG" id="COG0820">
    <property type="taxonomic scope" value="Bacteria"/>
</dbReference>
<dbReference type="OrthoDB" id="9793973at2"/>
<dbReference type="Proteomes" id="UP000000421">
    <property type="component" value="Chromosome"/>
</dbReference>
<dbReference type="GO" id="GO:0005737">
    <property type="term" value="C:cytoplasm"/>
    <property type="evidence" value="ECO:0007669"/>
    <property type="project" value="UniProtKB-SubCell"/>
</dbReference>
<dbReference type="GO" id="GO:0051539">
    <property type="term" value="F:4 iron, 4 sulfur cluster binding"/>
    <property type="evidence" value="ECO:0007669"/>
    <property type="project" value="UniProtKB-UniRule"/>
</dbReference>
<dbReference type="GO" id="GO:0046872">
    <property type="term" value="F:metal ion binding"/>
    <property type="evidence" value="ECO:0007669"/>
    <property type="project" value="UniProtKB-KW"/>
</dbReference>
<dbReference type="GO" id="GO:0070040">
    <property type="term" value="F:rRNA (adenine(2503)-C2-)-methyltransferase activity"/>
    <property type="evidence" value="ECO:0007669"/>
    <property type="project" value="UniProtKB-UniRule"/>
</dbReference>
<dbReference type="GO" id="GO:0019843">
    <property type="term" value="F:rRNA binding"/>
    <property type="evidence" value="ECO:0007669"/>
    <property type="project" value="UniProtKB-UniRule"/>
</dbReference>
<dbReference type="GO" id="GO:0002935">
    <property type="term" value="F:tRNA (adenine(37)-C2)-methyltransferase activity"/>
    <property type="evidence" value="ECO:0007669"/>
    <property type="project" value="UniProtKB-UniRule"/>
</dbReference>
<dbReference type="GO" id="GO:0000049">
    <property type="term" value="F:tRNA binding"/>
    <property type="evidence" value="ECO:0007669"/>
    <property type="project" value="UniProtKB-UniRule"/>
</dbReference>
<dbReference type="GO" id="GO:0070475">
    <property type="term" value="P:rRNA base methylation"/>
    <property type="evidence" value="ECO:0007669"/>
    <property type="project" value="UniProtKB-UniRule"/>
</dbReference>
<dbReference type="GO" id="GO:0030488">
    <property type="term" value="P:tRNA methylation"/>
    <property type="evidence" value="ECO:0007669"/>
    <property type="project" value="UniProtKB-UniRule"/>
</dbReference>
<dbReference type="CDD" id="cd01335">
    <property type="entry name" value="Radical_SAM"/>
    <property type="match status" value="1"/>
</dbReference>
<dbReference type="FunFam" id="3.20.20.70:FF:000008">
    <property type="entry name" value="Dual-specificity RNA methyltransferase RlmN"/>
    <property type="match status" value="1"/>
</dbReference>
<dbReference type="Gene3D" id="1.10.150.530">
    <property type="match status" value="1"/>
</dbReference>
<dbReference type="Gene3D" id="3.20.20.70">
    <property type="entry name" value="Aldolase class I"/>
    <property type="match status" value="1"/>
</dbReference>
<dbReference type="HAMAP" id="MF_01849">
    <property type="entry name" value="RNA_methyltr_RlmN"/>
    <property type="match status" value="1"/>
</dbReference>
<dbReference type="InterPro" id="IPR013785">
    <property type="entry name" value="Aldolase_TIM"/>
</dbReference>
<dbReference type="InterPro" id="IPR040072">
    <property type="entry name" value="Methyltransferase_A"/>
</dbReference>
<dbReference type="InterPro" id="IPR048641">
    <property type="entry name" value="RlmN_N"/>
</dbReference>
<dbReference type="InterPro" id="IPR027492">
    <property type="entry name" value="RNA_MTrfase_RlmN"/>
</dbReference>
<dbReference type="InterPro" id="IPR004383">
    <property type="entry name" value="rRNA_lsu_MTrfase_RlmN/Cfr"/>
</dbReference>
<dbReference type="InterPro" id="IPR007197">
    <property type="entry name" value="rSAM"/>
</dbReference>
<dbReference type="NCBIfam" id="TIGR00048">
    <property type="entry name" value="rRNA_mod_RlmN"/>
    <property type="match status" value="1"/>
</dbReference>
<dbReference type="PANTHER" id="PTHR30544">
    <property type="entry name" value="23S RRNA METHYLTRANSFERASE"/>
    <property type="match status" value="1"/>
</dbReference>
<dbReference type="PANTHER" id="PTHR30544:SF5">
    <property type="entry name" value="RADICAL SAM CORE DOMAIN-CONTAINING PROTEIN"/>
    <property type="match status" value="1"/>
</dbReference>
<dbReference type="Pfam" id="PF04055">
    <property type="entry name" value="Radical_SAM"/>
    <property type="match status" value="1"/>
</dbReference>
<dbReference type="Pfam" id="PF21016">
    <property type="entry name" value="RlmN_N"/>
    <property type="match status" value="1"/>
</dbReference>
<dbReference type="PIRSF" id="PIRSF006004">
    <property type="entry name" value="CHP00048"/>
    <property type="match status" value="1"/>
</dbReference>
<dbReference type="SFLD" id="SFLDF00275">
    <property type="entry name" value="adenosine_C2_methyltransferase"/>
    <property type="match status" value="1"/>
</dbReference>
<dbReference type="SFLD" id="SFLDS00029">
    <property type="entry name" value="Radical_SAM"/>
    <property type="match status" value="1"/>
</dbReference>
<dbReference type="SUPFAM" id="SSF102114">
    <property type="entry name" value="Radical SAM enzymes"/>
    <property type="match status" value="1"/>
</dbReference>
<dbReference type="PROSITE" id="PS51918">
    <property type="entry name" value="RADICAL_SAM"/>
    <property type="match status" value="1"/>
</dbReference>
<comment type="function">
    <text evidence="1">Specifically methylates position 2 of adenine 2503 in 23S rRNA and position 2 of adenine 37 in tRNAs. m2A2503 modification seems to play a crucial role in the proofreading step occurring at the peptidyl transferase center and thus would serve to optimize ribosomal fidelity.</text>
</comment>
<comment type="catalytic activity">
    <reaction evidence="1">
        <text>adenosine(2503) in 23S rRNA + 2 reduced [2Fe-2S]-[ferredoxin] + 2 S-adenosyl-L-methionine = 2-methyladenosine(2503) in 23S rRNA + 5'-deoxyadenosine + L-methionine + 2 oxidized [2Fe-2S]-[ferredoxin] + S-adenosyl-L-homocysteine</text>
        <dbReference type="Rhea" id="RHEA:42916"/>
        <dbReference type="Rhea" id="RHEA-COMP:10000"/>
        <dbReference type="Rhea" id="RHEA-COMP:10001"/>
        <dbReference type="Rhea" id="RHEA-COMP:10152"/>
        <dbReference type="Rhea" id="RHEA-COMP:10282"/>
        <dbReference type="ChEBI" id="CHEBI:17319"/>
        <dbReference type="ChEBI" id="CHEBI:33737"/>
        <dbReference type="ChEBI" id="CHEBI:33738"/>
        <dbReference type="ChEBI" id="CHEBI:57844"/>
        <dbReference type="ChEBI" id="CHEBI:57856"/>
        <dbReference type="ChEBI" id="CHEBI:59789"/>
        <dbReference type="ChEBI" id="CHEBI:74411"/>
        <dbReference type="ChEBI" id="CHEBI:74497"/>
        <dbReference type="EC" id="2.1.1.192"/>
    </reaction>
</comment>
<comment type="catalytic activity">
    <reaction evidence="1">
        <text>adenosine(37) in tRNA + 2 reduced [2Fe-2S]-[ferredoxin] + 2 S-adenosyl-L-methionine = 2-methyladenosine(37) in tRNA + 5'-deoxyadenosine + L-methionine + 2 oxidized [2Fe-2S]-[ferredoxin] + S-adenosyl-L-homocysteine</text>
        <dbReference type="Rhea" id="RHEA:43332"/>
        <dbReference type="Rhea" id="RHEA-COMP:10000"/>
        <dbReference type="Rhea" id="RHEA-COMP:10001"/>
        <dbReference type="Rhea" id="RHEA-COMP:10162"/>
        <dbReference type="Rhea" id="RHEA-COMP:10485"/>
        <dbReference type="ChEBI" id="CHEBI:17319"/>
        <dbReference type="ChEBI" id="CHEBI:33737"/>
        <dbReference type="ChEBI" id="CHEBI:33738"/>
        <dbReference type="ChEBI" id="CHEBI:57844"/>
        <dbReference type="ChEBI" id="CHEBI:57856"/>
        <dbReference type="ChEBI" id="CHEBI:59789"/>
        <dbReference type="ChEBI" id="CHEBI:74411"/>
        <dbReference type="ChEBI" id="CHEBI:74497"/>
        <dbReference type="EC" id="2.1.1.192"/>
    </reaction>
</comment>
<comment type="cofactor">
    <cofactor evidence="1">
        <name>[4Fe-4S] cluster</name>
        <dbReference type="ChEBI" id="CHEBI:49883"/>
    </cofactor>
    <text evidence="1">Binds 1 [4Fe-4S] cluster. The cluster is coordinated with 3 cysteines and an exchangeable S-adenosyl-L-methionine.</text>
</comment>
<comment type="subcellular location">
    <subcellularLocation>
        <location evidence="1">Cytoplasm</location>
    </subcellularLocation>
</comment>
<comment type="miscellaneous">
    <text evidence="1">Reaction proceeds by a ping-pong mechanism involving intermediate methylation of a conserved cysteine residue.</text>
</comment>
<comment type="similarity">
    <text evidence="1">Belongs to the radical SAM superfamily. RlmN family.</text>
</comment>
<name>RLMN_BARHE</name>
<proteinExistence type="inferred from homology"/>
<organism>
    <name type="scientific">Bartonella henselae (strain ATCC 49882 / DSM 28221 / CCUG 30454 / Houston 1)</name>
    <name type="common">Rochalimaea henselae</name>
    <dbReference type="NCBI Taxonomy" id="283166"/>
    <lineage>
        <taxon>Bacteria</taxon>
        <taxon>Pseudomonadati</taxon>
        <taxon>Pseudomonadota</taxon>
        <taxon>Alphaproteobacteria</taxon>
        <taxon>Hyphomicrobiales</taxon>
        <taxon>Bartonellaceae</taxon>
        <taxon>Bartonella</taxon>
    </lineage>
</organism>
<reference key="1">
    <citation type="journal article" date="2004" name="Proc. Natl. Acad. Sci. U.S.A.">
        <title>The louse-borne human pathogen Bartonella quintana is a genomic derivative of the zoonotic agent Bartonella henselae.</title>
        <authorList>
            <person name="Alsmark U.C.M."/>
            <person name="Frank A.C."/>
            <person name="Karlberg E.O."/>
            <person name="Legault B.-A."/>
            <person name="Ardell D.H."/>
            <person name="Canbaeck B."/>
            <person name="Eriksson A.-S."/>
            <person name="Naeslund A.K."/>
            <person name="Handley S.A."/>
            <person name="Huvet M."/>
            <person name="La Scola B."/>
            <person name="Holmberg M."/>
            <person name="Andersson S.G.E."/>
        </authorList>
    </citation>
    <scope>NUCLEOTIDE SEQUENCE [LARGE SCALE GENOMIC DNA]</scope>
    <source>
        <strain>ATCC 49882 / DSM 28221 / CCUG 30454 / Houston 1</strain>
    </source>
</reference>
<gene>
    <name evidence="1" type="primary">rlmN</name>
    <name type="ordered locus">BH00200</name>
</gene>
<keyword id="KW-0004">4Fe-4S</keyword>
<keyword id="KW-0963">Cytoplasm</keyword>
<keyword id="KW-1015">Disulfide bond</keyword>
<keyword id="KW-0408">Iron</keyword>
<keyword id="KW-0411">Iron-sulfur</keyword>
<keyword id="KW-0479">Metal-binding</keyword>
<keyword id="KW-0489">Methyltransferase</keyword>
<keyword id="KW-0698">rRNA processing</keyword>
<keyword id="KW-0949">S-adenosyl-L-methionine</keyword>
<keyword id="KW-0808">Transferase</keyword>
<keyword id="KW-0819">tRNA processing</keyword>
<feature type="chain" id="PRO_0000350045" description="Dual-specificity RNA methyltransferase RlmN">
    <location>
        <begin position="1"/>
        <end position="408"/>
    </location>
</feature>
<feature type="domain" description="Radical SAM core" evidence="2">
    <location>
        <begin position="132"/>
        <end position="373"/>
    </location>
</feature>
<feature type="active site" description="Proton acceptor" evidence="1">
    <location>
        <position position="126"/>
    </location>
</feature>
<feature type="active site" description="S-methylcysteine intermediate" evidence="1">
    <location>
        <position position="384"/>
    </location>
</feature>
<feature type="binding site" evidence="1">
    <location>
        <position position="146"/>
    </location>
    <ligand>
        <name>[4Fe-4S] cluster</name>
        <dbReference type="ChEBI" id="CHEBI:49883"/>
        <note>4Fe-4S-S-AdoMet</note>
    </ligand>
</feature>
<feature type="binding site" evidence="1">
    <location>
        <position position="150"/>
    </location>
    <ligand>
        <name>[4Fe-4S] cluster</name>
        <dbReference type="ChEBI" id="CHEBI:49883"/>
        <note>4Fe-4S-S-AdoMet</note>
    </ligand>
</feature>
<feature type="binding site" evidence="1">
    <location>
        <position position="153"/>
    </location>
    <ligand>
        <name>[4Fe-4S] cluster</name>
        <dbReference type="ChEBI" id="CHEBI:49883"/>
        <note>4Fe-4S-S-AdoMet</note>
    </ligand>
</feature>
<feature type="binding site" evidence="1">
    <location>
        <begin position="210"/>
        <end position="211"/>
    </location>
    <ligand>
        <name>S-adenosyl-L-methionine</name>
        <dbReference type="ChEBI" id="CHEBI:59789"/>
    </ligand>
</feature>
<feature type="binding site" evidence="1">
    <location>
        <position position="242"/>
    </location>
    <ligand>
        <name>S-adenosyl-L-methionine</name>
        <dbReference type="ChEBI" id="CHEBI:59789"/>
    </ligand>
</feature>
<feature type="binding site" evidence="1">
    <location>
        <begin position="264"/>
        <end position="266"/>
    </location>
    <ligand>
        <name>S-adenosyl-L-methionine</name>
        <dbReference type="ChEBI" id="CHEBI:59789"/>
    </ligand>
</feature>
<feature type="binding site" evidence="1">
    <location>
        <position position="341"/>
    </location>
    <ligand>
        <name>S-adenosyl-L-methionine</name>
        <dbReference type="ChEBI" id="CHEBI:59789"/>
    </ligand>
</feature>
<feature type="disulfide bond" description="(transient)" evidence="1">
    <location>
        <begin position="139"/>
        <end position="384"/>
    </location>
</feature>
<accession>Q6G592</accession>